<accession>B3P0K6</accession>
<sequence length="615" mass="67270">MMDGFAQDWPTLTHTDNGLAMDQLGGDLPLDVGFEPQTRARSNTWPCPRPENFVEPTDELDSTKASNQQLAPGDSQQAIQNANAAKKNSSRRNAWGNLSYADLITHAIGSATDKRLTLSQIYEWMVQNVPYFKDKGDSNSSAGWKNSIRHNLSLHNRFMRVQNEGTGKSSWWMLNPEAKPGKSVRRRAASMETSRYEKRRGRAKKRVEALRQAGVVGLNDATPSPSSSVSEGLDHFPESPLHSGGGFQLSPDFRQRASSNASSCGRLSPIRAQDLEPDWGFPVDYQNTTMTQAHAQALDELTGTMADELTLCPQQQGFSAASGLPSQPPPPPYQPPQHQQAQQQQQQSPYALNGPAPGYNTLQPQSQCLLHRSLNCSCMHNARDGLSPNSVTTTMSPAYPNSEPSSDSLNTYSNVVLDGPADTAALMVQQQQQQQQMSASLEGQCLEVLNNEAQPIDEFNLENFPVGNLECNVEELLQQEMSYGGLLDINIPLATVNTNLVNSSSGPLSISNISNLSNLSNISNISNISSNSGSSLSLNQLQAQLQQQQQQQAQQQQAQQQQQAHQQHQQQLLLNNNNNSSSSLELATQTASANLNARVQYSQPSVVTSPPSWVH</sequence>
<name>FOXO_DROER</name>
<proteinExistence type="inferred from homology"/>
<feature type="chain" id="PRO_0000396505" description="Forkhead box protein O">
    <location>
        <begin position="1"/>
        <end position="615"/>
    </location>
</feature>
<feature type="DNA-binding region" description="Fork-head" evidence="3">
    <location>
        <begin position="95"/>
        <end position="201"/>
    </location>
</feature>
<feature type="region of interest" description="Disordered" evidence="4">
    <location>
        <begin position="39"/>
        <end position="77"/>
    </location>
</feature>
<feature type="region of interest" description="Disordered" evidence="4">
    <location>
        <begin position="182"/>
        <end position="205"/>
    </location>
</feature>
<feature type="region of interest" description="Disordered" evidence="4">
    <location>
        <begin position="217"/>
        <end position="269"/>
    </location>
</feature>
<feature type="region of interest" description="Disordered" evidence="4">
    <location>
        <begin position="318"/>
        <end position="359"/>
    </location>
</feature>
<feature type="region of interest" description="Disordered" evidence="4">
    <location>
        <begin position="389"/>
        <end position="409"/>
    </location>
</feature>
<feature type="compositionally biased region" description="Polar residues" evidence="4">
    <location>
        <begin position="63"/>
        <end position="77"/>
    </location>
</feature>
<feature type="compositionally biased region" description="Polar residues" evidence="4">
    <location>
        <begin position="221"/>
        <end position="230"/>
    </location>
</feature>
<feature type="compositionally biased region" description="Polar residues" evidence="4">
    <location>
        <begin position="256"/>
        <end position="265"/>
    </location>
</feature>
<feature type="compositionally biased region" description="Pro residues" evidence="4">
    <location>
        <begin position="326"/>
        <end position="335"/>
    </location>
</feature>
<feature type="compositionally biased region" description="Low complexity" evidence="4">
    <location>
        <begin position="336"/>
        <end position="351"/>
    </location>
</feature>
<feature type="modified residue" description="Phosphothreonine; by PKB/AKT1" evidence="2">
    <location>
        <position position="44"/>
    </location>
</feature>
<feature type="modified residue" description="Phosphoserine" evidence="2">
    <location>
        <position position="75"/>
    </location>
</feature>
<feature type="modified residue" description="Phosphoserine; by PKB/AKT1" evidence="2">
    <location>
        <position position="190"/>
    </location>
</feature>
<feature type="modified residue" description="Phosphoserine; by PKB/AKT1" evidence="2">
    <location>
        <position position="259"/>
    </location>
</feature>
<feature type="modified residue" description="Phosphoserine" evidence="2">
    <location>
        <position position="262"/>
    </location>
</feature>
<feature type="modified residue" description="Phosphoserine" evidence="2">
    <location>
        <position position="263"/>
    </location>
</feature>
<feature type="modified residue" description="Phosphoserine" evidence="2">
    <location>
        <position position="268"/>
    </location>
</feature>
<evidence type="ECO:0000250" key="1"/>
<evidence type="ECO:0000250" key="2">
    <source>
        <dbReference type="UniProtKB" id="Q95V55"/>
    </source>
</evidence>
<evidence type="ECO:0000255" key="3">
    <source>
        <dbReference type="PROSITE-ProRule" id="PRU00089"/>
    </source>
</evidence>
<evidence type="ECO:0000256" key="4">
    <source>
        <dbReference type="SAM" id="MobiDB-lite"/>
    </source>
</evidence>
<evidence type="ECO:0000305" key="5"/>
<evidence type="ECO:0000312" key="6">
    <source>
        <dbReference type="EMBL" id="EDV48832.1"/>
    </source>
</evidence>
<dbReference type="EMBL" id="CH954181">
    <property type="protein sequence ID" value="EDV48832.1"/>
    <property type="status" value="ALT_SEQ"/>
    <property type="molecule type" value="Genomic_DNA"/>
</dbReference>
<dbReference type="RefSeq" id="XP_001979874.2">
    <property type="nucleotide sequence ID" value="XM_001979838.2"/>
</dbReference>
<dbReference type="SMR" id="B3P0K6"/>
<dbReference type="eggNOG" id="KOG2294">
    <property type="taxonomic scope" value="Eukaryota"/>
</dbReference>
<dbReference type="OrthoDB" id="5954824at2759"/>
<dbReference type="ChiTaRS" id="foxo">
    <property type="organism name" value="fly"/>
</dbReference>
<dbReference type="Proteomes" id="UP000008711">
    <property type="component" value="Unassembled WGS sequence"/>
</dbReference>
<dbReference type="GO" id="GO:0005737">
    <property type="term" value="C:cytoplasm"/>
    <property type="evidence" value="ECO:0000250"/>
    <property type="project" value="UniProtKB"/>
</dbReference>
<dbReference type="GO" id="GO:0005634">
    <property type="term" value="C:nucleus"/>
    <property type="evidence" value="ECO:0000250"/>
    <property type="project" value="UniProtKB"/>
</dbReference>
<dbReference type="GO" id="GO:0003700">
    <property type="term" value="F:DNA-binding transcription factor activity"/>
    <property type="evidence" value="ECO:0000250"/>
    <property type="project" value="UniProtKB"/>
</dbReference>
<dbReference type="GO" id="GO:0000981">
    <property type="term" value="F:DNA-binding transcription factor activity, RNA polymerase II-specific"/>
    <property type="evidence" value="ECO:0007669"/>
    <property type="project" value="TreeGrafter"/>
</dbReference>
<dbReference type="GO" id="GO:0000978">
    <property type="term" value="F:RNA polymerase II cis-regulatory region sequence-specific DNA binding"/>
    <property type="evidence" value="ECO:0007669"/>
    <property type="project" value="TreeGrafter"/>
</dbReference>
<dbReference type="GO" id="GO:0030154">
    <property type="term" value="P:cell differentiation"/>
    <property type="evidence" value="ECO:0007669"/>
    <property type="project" value="UniProtKB-KW"/>
</dbReference>
<dbReference type="GO" id="GO:0042593">
    <property type="term" value="P:glucose homeostasis"/>
    <property type="evidence" value="ECO:0000250"/>
    <property type="project" value="UniProtKB"/>
</dbReference>
<dbReference type="GO" id="GO:0030308">
    <property type="term" value="P:negative regulation of cell growth"/>
    <property type="evidence" value="ECO:0000250"/>
    <property type="project" value="UniProtKB"/>
</dbReference>
<dbReference type="GO" id="GO:0008285">
    <property type="term" value="P:negative regulation of cell population proliferation"/>
    <property type="evidence" value="ECO:0000250"/>
    <property type="project" value="UniProtKB"/>
</dbReference>
<dbReference type="GO" id="GO:0046627">
    <property type="term" value="P:negative regulation of insulin receptor signaling pathway"/>
    <property type="evidence" value="ECO:0000250"/>
    <property type="project" value="UniProtKB"/>
</dbReference>
<dbReference type="GO" id="GO:0006355">
    <property type="term" value="P:regulation of DNA-templated transcription"/>
    <property type="evidence" value="ECO:0000250"/>
    <property type="project" value="UniProtKB"/>
</dbReference>
<dbReference type="GO" id="GO:0019216">
    <property type="term" value="P:regulation of lipid metabolic process"/>
    <property type="evidence" value="ECO:0000250"/>
    <property type="project" value="UniProtKB"/>
</dbReference>
<dbReference type="CDD" id="cd20032">
    <property type="entry name" value="FH_FOXO"/>
    <property type="match status" value="1"/>
</dbReference>
<dbReference type="FunFam" id="1.10.10.10:FF:000032">
    <property type="entry name" value="Forkhead box protein O4"/>
    <property type="match status" value="1"/>
</dbReference>
<dbReference type="Gene3D" id="1.10.10.10">
    <property type="entry name" value="Winged helix-like DNA-binding domain superfamily/Winged helix DNA-binding domain"/>
    <property type="match status" value="1"/>
</dbReference>
<dbReference type="InterPro" id="IPR001766">
    <property type="entry name" value="Fork_head_dom"/>
</dbReference>
<dbReference type="InterPro" id="IPR030456">
    <property type="entry name" value="TF_fork_head_CS_2"/>
</dbReference>
<dbReference type="InterPro" id="IPR036388">
    <property type="entry name" value="WH-like_DNA-bd_sf"/>
</dbReference>
<dbReference type="InterPro" id="IPR036390">
    <property type="entry name" value="WH_DNA-bd_sf"/>
</dbReference>
<dbReference type="PANTHER" id="PTHR45767">
    <property type="entry name" value="FORKHEAD BOX PROTEIN O"/>
    <property type="match status" value="1"/>
</dbReference>
<dbReference type="PANTHER" id="PTHR45767:SF2">
    <property type="entry name" value="FORKHEAD BOX PROTEIN O"/>
    <property type="match status" value="1"/>
</dbReference>
<dbReference type="Pfam" id="PF00250">
    <property type="entry name" value="Forkhead"/>
    <property type="match status" value="1"/>
</dbReference>
<dbReference type="PRINTS" id="PR00053">
    <property type="entry name" value="FORKHEAD"/>
</dbReference>
<dbReference type="SMART" id="SM00339">
    <property type="entry name" value="FH"/>
    <property type="match status" value="1"/>
</dbReference>
<dbReference type="SUPFAM" id="SSF46785">
    <property type="entry name" value="Winged helix' DNA-binding domain"/>
    <property type="match status" value="1"/>
</dbReference>
<dbReference type="PROSITE" id="PS00658">
    <property type="entry name" value="FORK_HEAD_2"/>
    <property type="match status" value="1"/>
</dbReference>
<dbReference type="PROSITE" id="PS50039">
    <property type="entry name" value="FORK_HEAD_3"/>
    <property type="match status" value="1"/>
</dbReference>
<comment type="function">
    <text evidence="1">Transcription factor involved in the regulation of the insulin signaling pathway. Consistently activates both the downstream target Thor\d4EBP and the feedback control target InR. Involved in negative regulation of the cell cycle, modulating cell growth and proliferation. In response to cellular stresses, such as nutrient deprivation or increased levels of reactive oxygen species, foxo is activated and inhibits growth through the action of target genes such as Thor. Foxo activated in the adult fat body can regulate lifespan in adults; an insulin peptide itself may function as one secondary messenger of insulin-regulated aging. Also regulates Lip4, homolog of human acid lipases, thereby acting as a key modulator of lipid metabolism by insulin signaling and integrates insulin responses to glucose and lipid homeostasis (By similarity).</text>
</comment>
<comment type="subunit">
    <text evidence="2">Interacts with melt.</text>
</comment>
<comment type="subcellular location">
    <subcellularLocation>
        <location evidence="2">Cytoplasm</location>
    </subcellularLocation>
    <subcellularLocation>
        <location evidence="2 3">Nucleus</location>
    </subcellularLocation>
    <text evidence="2">When phosphorylated, translocated from nucleus to cytoplasm. Dephosphorylation triggers nuclear translocation (By similarity).</text>
</comment>
<comment type="sequence caution" evidence="5">
    <conflict type="erroneous gene model prediction">
        <sequence resource="EMBL-CDS" id="EDV48832"/>
    </conflict>
</comment>
<keyword id="KW-0010">Activator</keyword>
<keyword id="KW-0131">Cell cycle</keyword>
<keyword id="KW-0963">Cytoplasm</keyword>
<keyword id="KW-0217">Developmental protein</keyword>
<keyword id="KW-0221">Differentiation</keyword>
<keyword id="KW-0238">DNA-binding</keyword>
<keyword id="KW-0341">Growth regulation</keyword>
<keyword id="KW-0539">Nucleus</keyword>
<keyword id="KW-0597">Phosphoprotein</keyword>
<keyword id="KW-0804">Transcription</keyword>
<keyword id="KW-0805">Transcription regulation</keyword>
<reference evidence="6" key="1">
    <citation type="journal article" date="2007" name="Nature">
        <title>Evolution of genes and genomes on the Drosophila phylogeny.</title>
        <authorList>
            <consortium name="Drosophila 12 genomes consortium"/>
        </authorList>
    </citation>
    <scope>NUCLEOTIDE SEQUENCE [LARGE SCALE GENOMIC DNA]</scope>
    <source>
        <strain evidence="6">Tucson 14021-0224.01</strain>
    </source>
</reference>
<protein>
    <recommendedName>
        <fullName evidence="2">Forkhead box protein O</fullName>
    </recommendedName>
</protein>
<organism>
    <name type="scientific">Drosophila erecta</name>
    <name type="common">Fruit fly</name>
    <dbReference type="NCBI Taxonomy" id="7220"/>
    <lineage>
        <taxon>Eukaryota</taxon>
        <taxon>Metazoa</taxon>
        <taxon>Ecdysozoa</taxon>
        <taxon>Arthropoda</taxon>
        <taxon>Hexapoda</taxon>
        <taxon>Insecta</taxon>
        <taxon>Pterygota</taxon>
        <taxon>Neoptera</taxon>
        <taxon>Endopterygota</taxon>
        <taxon>Diptera</taxon>
        <taxon>Brachycera</taxon>
        <taxon>Muscomorpha</taxon>
        <taxon>Ephydroidea</taxon>
        <taxon>Drosophilidae</taxon>
        <taxon>Drosophila</taxon>
        <taxon>Sophophora</taxon>
    </lineage>
</organism>
<gene>
    <name evidence="2" type="primary">foxo</name>
    <name type="ORF">GG16833</name>
</gene>